<dbReference type="EC" id="2.7.7.6" evidence="1"/>
<dbReference type="EMBL" id="EF115543">
    <property type="protein sequence ID" value="ABK79571.1"/>
    <property type="molecule type" value="Genomic_DNA"/>
</dbReference>
<dbReference type="RefSeq" id="YP_874727.1">
    <property type="nucleotide sequence ID" value="NC_008591.1"/>
</dbReference>
<dbReference type="SMR" id="A1E9Z9"/>
<dbReference type="GeneID" id="4524921"/>
<dbReference type="GO" id="GO:0009507">
    <property type="term" value="C:chloroplast"/>
    <property type="evidence" value="ECO:0007669"/>
    <property type="project" value="UniProtKB-SubCell"/>
</dbReference>
<dbReference type="GO" id="GO:0000428">
    <property type="term" value="C:DNA-directed RNA polymerase complex"/>
    <property type="evidence" value="ECO:0007669"/>
    <property type="project" value="UniProtKB-KW"/>
</dbReference>
<dbReference type="GO" id="GO:0005739">
    <property type="term" value="C:mitochondrion"/>
    <property type="evidence" value="ECO:0007669"/>
    <property type="project" value="GOC"/>
</dbReference>
<dbReference type="GO" id="GO:0003677">
    <property type="term" value="F:DNA binding"/>
    <property type="evidence" value="ECO:0007669"/>
    <property type="project" value="UniProtKB-UniRule"/>
</dbReference>
<dbReference type="GO" id="GO:0003899">
    <property type="term" value="F:DNA-directed RNA polymerase activity"/>
    <property type="evidence" value="ECO:0007669"/>
    <property type="project" value="UniProtKB-UniRule"/>
</dbReference>
<dbReference type="GO" id="GO:0000287">
    <property type="term" value="F:magnesium ion binding"/>
    <property type="evidence" value="ECO:0007669"/>
    <property type="project" value="UniProtKB-UniRule"/>
</dbReference>
<dbReference type="GO" id="GO:0008270">
    <property type="term" value="F:zinc ion binding"/>
    <property type="evidence" value="ECO:0007669"/>
    <property type="project" value="UniProtKB-UniRule"/>
</dbReference>
<dbReference type="GO" id="GO:0006351">
    <property type="term" value="P:DNA-templated transcription"/>
    <property type="evidence" value="ECO:0007669"/>
    <property type="project" value="UniProtKB-UniRule"/>
</dbReference>
<dbReference type="Gene3D" id="1.10.40.90">
    <property type="match status" value="1"/>
</dbReference>
<dbReference type="Gene3D" id="2.40.40.20">
    <property type="match status" value="1"/>
</dbReference>
<dbReference type="Gene3D" id="4.10.860.120">
    <property type="entry name" value="RNA polymerase II, clamp domain"/>
    <property type="match status" value="1"/>
</dbReference>
<dbReference type="Gene3D" id="1.10.274.100">
    <property type="entry name" value="RNA polymerase Rpb1, domain 3"/>
    <property type="match status" value="1"/>
</dbReference>
<dbReference type="HAMAP" id="MF_01323">
    <property type="entry name" value="RNApol_bact_RpoC1"/>
    <property type="match status" value="1"/>
</dbReference>
<dbReference type="InterPro" id="IPR045867">
    <property type="entry name" value="DNA-dir_RpoC_beta_prime"/>
</dbReference>
<dbReference type="InterPro" id="IPR000722">
    <property type="entry name" value="RNA_pol_asu"/>
</dbReference>
<dbReference type="InterPro" id="IPR006592">
    <property type="entry name" value="RNA_pol_N"/>
</dbReference>
<dbReference type="InterPro" id="IPR007080">
    <property type="entry name" value="RNA_pol_Rpb1_1"/>
</dbReference>
<dbReference type="InterPro" id="IPR042102">
    <property type="entry name" value="RNA_pol_Rpb1_3_sf"/>
</dbReference>
<dbReference type="InterPro" id="IPR044893">
    <property type="entry name" value="RNA_pol_Rpb1_clamp_domain"/>
</dbReference>
<dbReference type="InterPro" id="IPR034678">
    <property type="entry name" value="RNApol_RpoC1"/>
</dbReference>
<dbReference type="PANTHER" id="PTHR19376">
    <property type="entry name" value="DNA-DIRECTED RNA POLYMERASE"/>
    <property type="match status" value="1"/>
</dbReference>
<dbReference type="PANTHER" id="PTHR19376:SF54">
    <property type="entry name" value="DNA-DIRECTED RNA POLYMERASE SUBUNIT BETA"/>
    <property type="match status" value="1"/>
</dbReference>
<dbReference type="Pfam" id="PF04997">
    <property type="entry name" value="RNA_pol_Rpb1_1"/>
    <property type="match status" value="1"/>
</dbReference>
<dbReference type="Pfam" id="PF00623">
    <property type="entry name" value="RNA_pol_Rpb1_2"/>
    <property type="match status" value="2"/>
</dbReference>
<dbReference type="SMART" id="SM00663">
    <property type="entry name" value="RPOLA_N"/>
    <property type="match status" value="1"/>
</dbReference>
<dbReference type="SUPFAM" id="SSF64484">
    <property type="entry name" value="beta and beta-prime subunits of DNA dependent RNA-polymerase"/>
    <property type="match status" value="1"/>
</dbReference>
<sequence length="682" mass="78199">MIDQYKHQQLQIGLVSPQQIKAWANKNLPNGEVVGEVTRPSTFHYKTDKPEKDGLFCERIFGPIKSGICACGNSRPSGAENEDERFCQKCGVEFVDSRIRRYQMGYIKLACPVTHVWYLKGLPSYIANLLDKPLKKLEGLVYGDFSFARPSTKKPTFLRLRGLFEEEISSCNHSISPFFSTPGFATFRNREIATGAGAIREQLADLDLRIIIENSLVEWKELEDEGYSGDEWEDRKRRIRKVFLIRRMQLAKHFIQTNVEPEWMVLCLLPVLPPELRPIVYRSGDKVVTSDINELYKRVIRRNNNLAYLLKRSELAPADLVMCQEKLVQEAVDTLLDSGSRGQPIRDGHNKVYKSLSDVIEGKEGRFRETLLGKRVDYSGRSVIVVGPSLSLHQCGLPLEIAIKLFQLFVIRDLITKRATSNVRIAKRKIWEKEPIVWEILQEVMRGHPVLLNRAPTLHRLGIQAFQPTLVEGRTISLHPLVCKGFNADFDGDQMAVHLPLSLEAQAEARLLMFSHMNLLSPAIGDPICVPTQDMLIGLYVLTIGNHRGIYANRYNSCENYPNQKVNYNNNNSKYTKDKEPHFSSSYDAMGAYRQKLISLDSPLWLRWKLDQRVIGSREVPIEVQYESLGTYHEIYAHYLIVGNRKKEIRSIYIRTTLGHISFYREIEEAIQGFSQAYSYTI</sequence>
<proteinExistence type="inferred from homology"/>
<protein>
    <recommendedName>
        <fullName evidence="1">DNA-directed RNA polymerase subunit beta'</fullName>
        <ecNumber evidence="1">2.7.7.6</ecNumber>
    </recommendedName>
    <alternativeName>
        <fullName evidence="1">PEP</fullName>
    </alternativeName>
    <alternativeName>
        <fullName evidence="1">Plastid-encoded RNA polymerase subunit beta'</fullName>
        <shortName evidence="1">RNA polymerase subunit beta'</shortName>
    </alternativeName>
</protein>
<keyword id="KW-0150">Chloroplast</keyword>
<keyword id="KW-0240">DNA-directed RNA polymerase</keyword>
<keyword id="KW-0460">Magnesium</keyword>
<keyword id="KW-0479">Metal-binding</keyword>
<keyword id="KW-0548">Nucleotidyltransferase</keyword>
<keyword id="KW-0934">Plastid</keyword>
<keyword id="KW-0804">Transcription</keyword>
<keyword id="KW-0808">Transferase</keyword>
<keyword id="KW-0862">Zinc</keyword>
<reference key="1">
    <citation type="journal article" date="2007" name="Theor. Appl. Genet.">
        <title>Complete chloroplast genome sequences of Hordeum vulgare, Sorghum bicolor and Agrostis stolonifera, and comparative analyses with other grass genomes.</title>
        <authorList>
            <person name="Saski C."/>
            <person name="Lee S.-B."/>
            <person name="Fjellheim S."/>
            <person name="Guda C."/>
            <person name="Jansen R.K."/>
            <person name="Luo H."/>
            <person name="Tomkins J."/>
            <person name="Rognli O.A."/>
            <person name="Daniell H."/>
            <person name="Clarke J.L."/>
        </authorList>
    </citation>
    <scope>NUCLEOTIDE SEQUENCE [LARGE SCALE GENOMIC DNA]</scope>
    <source>
        <strain>cv. Penn A-4</strain>
    </source>
</reference>
<comment type="function">
    <text evidence="1">DNA-dependent RNA polymerase catalyzes the transcription of DNA into RNA using the four ribonucleoside triphosphates as substrates.</text>
</comment>
<comment type="catalytic activity">
    <reaction evidence="1">
        <text>RNA(n) + a ribonucleoside 5'-triphosphate = RNA(n+1) + diphosphate</text>
        <dbReference type="Rhea" id="RHEA:21248"/>
        <dbReference type="Rhea" id="RHEA-COMP:14527"/>
        <dbReference type="Rhea" id="RHEA-COMP:17342"/>
        <dbReference type="ChEBI" id="CHEBI:33019"/>
        <dbReference type="ChEBI" id="CHEBI:61557"/>
        <dbReference type="ChEBI" id="CHEBI:140395"/>
        <dbReference type="EC" id="2.7.7.6"/>
    </reaction>
</comment>
<comment type="cofactor">
    <cofactor evidence="1">
        <name>Mg(2+)</name>
        <dbReference type="ChEBI" id="CHEBI:18420"/>
    </cofactor>
    <text evidence="1">Binds 1 Mg(2+) ion per subunit.</text>
</comment>
<comment type="cofactor">
    <cofactor evidence="1">
        <name>Zn(2+)</name>
        <dbReference type="ChEBI" id="CHEBI:29105"/>
    </cofactor>
    <text evidence="1">Binds 1 Zn(2+) ion per subunit.</text>
</comment>
<comment type="subunit">
    <text evidence="1">In plastids the minimal PEP RNA polymerase catalytic core is composed of four subunits: alpha, beta, beta', and beta''. When a (nuclear-encoded) sigma factor is associated with the core the holoenzyme is formed, which can initiate transcription.</text>
</comment>
<comment type="subcellular location">
    <subcellularLocation>
        <location evidence="1">Plastid</location>
        <location evidence="1">Chloroplast</location>
    </subcellularLocation>
</comment>
<comment type="similarity">
    <text evidence="1">Belongs to the RNA polymerase beta' chain family. RpoC1 subfamily.</text>
</comment>
<evidence type="ECO:0000255" key="1">
    <source>
        <dbReference type="HAMAP-Rule" id="MF_01323"/>
    </source>
</evidence>
<feature type="chain" id="PRO_0000277161" description="DNA-directed RNA polymerase subunit beta'">
    <location>
        <begin position="1"/>
        <end position="682"/>
    </location>
</feature>
<feature type="binding site" evidence="1">
    <location>
        <position position="69"/>
    </location>
    <ligand>
        <name>Zn(2+)</name>
        <dbReference type="ChEBI" id="CHEBI:29105"/>
    </ligand>
</feature>
<feature type="binding site" evidence="1">
    <location>
        <position position="71"/>
    </location>
    <ligand>
        <name>Zn(2+)</name>
        <dbReference type="ChEBI" id="CHEBI:29105"/>
    </ligand>
</feature>
<feature type="binding site" evidence="1">
    <location>
        <position position="87"/>
    </location>
    <ligand>
        <name>Zn(2+)</name>
        <dbReference type="ChEBI" id="CHEBI:29105"/>
    </ligand>
</feature>
<feature type="binding site" evidence="1">
    <location>
        <position position="90"/>
    </location>
    <ligand>
        <name>Zn(2+)</name>
        <dbReference type="ChEBI" id="CHEBI:29105"/>
    </ligand>
</feature>
<feature type="binding site" evidence="1">
    <location>
        <position position="489"/>
    </location>
    <ligand>
        <name>Mg(2+)</name>
        <dbReference type="ChEBI" id="CHEBI:18420"/>
    </ligand>
</feature>
<feature type="binding site" evidence="1">
    <location>
        <position position="491"/>
    </location>
    <ligand>
        <name>Mg(2+)</name>
        <dbReference type="ChEBI" id="CHEBI:18420"/>
    </ligand>
</feature>
<feature type="binding site" evidence="1">
    <location>
        <position position="493"/>
    </location>
    <ligand>
        <name>Mg(2+)</name>
        <dbReference type="ChEBI" id="CHEBI:18420"/>
    </ligand>
</feature>
<accession>A1E9Z9</accession>
<gene>
    <name evidence="1" type="primary">rpoC1</name>
</gene>
<geneLocation type="chloroplast"/>
<name>RPOC1_AGRST</name>
<organism>
    <name type="scientific">Agrostis stolonifera</name>
    <name type="common">Creeping bentgrass</name>
    <dbReference type="NCBI Taxonomy" id="63632"/>
    <lineage>
        <taxon>Eukaryota</taxon>
        <taxon>Viridiplantae</taxon>
        <taxon>Streptophyta</taxon>
        <taxon>Embryophyta</taxon>
        <taxon>Tracheophyta</taxon>
        <taxon>Spermatophyta</taxon>
        <taxon>Magnoliopsida</taxon>
        <taxon>Liliopsida</taxon>
        <taxon>Poales</taxon>
        <taxon>Poaceae</taxon>
        <taxon>BOP clade</taxon>
        <taxon>Pooideae</taxon>
        <taxon>Poodae</taxon>
        <taxon>Poeae</taxon>
        <taxon>Poeae Chloroplast Group 1 (Aveneae type)</taxon>
        <taxon>Agrostidodinae</taxon>
        <taxon>Agrostidinae</taxon>
        <taxon>Agrostis</taxon>
    </lineage>
</organism>